<accession>A5ELN0</accession>
<reference key="1">
    <citation type="journal article" date="2007" name="Science">
        <title>Legumes symbioses: absence of nod genes in photosynthetic bradyrhizobia.</title>
        <authorList>
            <person name="Giraud E."/>
            <person name="Moulin L."/>
            <person name="Vallenet D."/>
            <person name="Barbe V."/>
            <person name="Cytryn E."/>
            <person name="Avarre J.-C."/>
            <person name="Jaubert M."/>
            <person name="Simon D."/>
            <person name="Cartieaux F."/>
            <person name="Prin Y."/>
            <person name="Bena G."/>
            <person name="Hannibal L."/>
            <person name="Fardoux J."/>
            <person name="Kojadinovic M."/>
            <person name="Vuillet L."/>
            <person name="Lajus A."/>
            <person name="Cruveiller S."/>
            <person name="Rouy Z."/>
            <person name="Mangenot S."/>
            <person name="Segurens B."/>
            <person name="Dossat C."/>
            <person name="Franck W.L."/>
            <person name="Chang W.-S."/>
            <person name="Saunders E."/>
            <person name="Bruce D."/>
            <person name="Richardson P."/>
            <person name="Normand P."/>
            <person name="Dreyfus B."/>
            <person name="Pignol D."/>
            <person name="Stacey G."/>
            <person name="Emerich D."/>
            <person name="Vermeglio A."/>
            <person name="Medigue C."/>
            <person name="Sadowsky M."/>
        </authorList>
    </citation>
    <scope>NUCLEOTIDE SEQUENCE [LARGE SCALE GENOMIC DNA]</scope>
    <source>
        <strain>BTAi1 / ATCC BAA-1182</strain>
    </source>
</reference>
<keyword id="KW-0963">Cytoplasm</keyword>
<keyword id="KW-0251">Elongation factor</keyword>
<keyword id="KW-0342">GTP-binding</keyword>
<keyword id="KW-0547">Nucleotide-binding</keyword>
<keyword id="KW-0648">Protein biosynthesis</keyword>
<keyword id="KW-1185">Reference proteome</keyword>
<sequence>MPRQHAIEDYRNFGIMAHIDAGKTTTTERILYYTGKSHKIGEVHEGAATMDWMEQEQERGITITSAATTAFWNGKRLNIIDTPGHVDFTIEVERSLRVLDGAVCVLDSNQGVEPQTETVWRQGDKYKVPRIVFANKMDKTGADFFKCLADIVDRLGAKPVAIQLPIGAENNFKGCIDLVTMKAIVWNDESLGAKFDHVEIPAELADQAKEYREKLVEAAVELDDDAMSAYLEGTEPDEATLKRLIRKAVLSGAFYPVLCGSAFKNKGVQPLLDAVVDYLPSPLDVPAIKGTDDKGNEVVRKADDKEPLSLLAFKIMDDPFVGTITFCRIYSGILTSGTGVVNSTREKKERIGRMLLMHANNREDIKEAYAGDIVALAGLKEARTGDTLCDPNNQVILEKMEFPEPVIEIAIEPKSKADQEKLGIALAKLAAEDPSFRVSTDHESGQTILKGMGELHLDIKVDILKRTYKVDANIGAPQVAFRERITKPANVDYTHKKQTGGTGQFAAVSLVVEPNEPGGGYVFESKIVGGAVPKEYIPGVEKGIESVLGAGVVAGFPVVDVKVALVDGKYHDVDSSALAFEIASRAAFREALQKGKSVLLEPIMKVEVVTPEDYTGSVIGDLNSRRGQIQGQDMRGNANVINAMVPLMNMFGYVNNLRSMSQGRATFTMQFSHYAEAPANVSAEVQKKFA</sequence>
<evidence type="ECO:0000255" key="1">
    <source>
        <dbReference type="HAMAP-Rule" id="MF_00054"/>
    </source>
</evidence>
<feature type="chain" id="PRO_1000008805" description="Elongation factor G">
    <location>
        <begin position="1"/>
        <end position="690"/>
    </location>
</feature>
<feature type="domain" description="tr-type G">
    <location>
        <begin position="8"/>
        <end position="283"/>
    </location>
</feature>
<feature type="binding site" evidence="1">
    <location>
        <begin position="17"/>
        <end position="24"/>
    </location>
    <ligand>
        <name>GTP</name>
        <dbReference type="ChEBI" id="CHEBI:37565"/>
    </ligand>
</feature>
<feature type="binding site" evidence="1">
    <location>
        <begin position="81"/>
        <end position="85"/>
    </location>
    <ligand>
        <name>GTP</name>
        <dbReference type="ChEBI" id="CHEBI:37565"/>
    </ligand>
</feature>
<feature type="binding site" evidence="1">
    <location>
        <begin position="135"/>
        <end position="138"/>
    </location>
    <ligand>
        <name>GTP</name>
        <dbReference type="ChEBI" id="CHEBI:37565"/>
    </ligand>
</feature>
<gene>
    <name evidence="1" type="primary">fusA</name>
    <name type="ordered locus">BBta_5073</name>
</gene>
<dbReference type="EMBL" id="CP000494">
    <property type="protein sequence ID" value="ABQ37074.1"/>
    <property type="molecule type" value="Genomic_DNA"/>
</dbReference>
<dbReference type="RefSeq" id="WP_012045046.1">
    <property type="nucleotide sequence ID" value="NC_009485.1"/>
</dbReference>
<dbReference type="SMR" id="A5ELN0"/>
<dbReference type="STRING" id="288000.BBta_5073"/>
<dbReference type="KEGG" id="bbt:BBta_5073"/>
<dbReference type="eggNOG" id="COG0480">
    <property type="taxonomic scope" value="Bacteria"/>
</dbReference>
<dbReference type="HOGENOM" id="CLU_002794_4_1_5"/>
<dbReference type="OrthoDB" id="9802948at2"/>
<dbReference type="Proteomes" id="UP000000246">
    <property type="component" value="Chromosome"/>
</dbReference>
<dbReference type="GO" id="GO:0005737">
    <property type="term" value="C:cytoplasm"/>
    <property type="evidence" value="ECO:0007669"/>
    <property type="project" value="UniProtKB-SubCell"/>
</dbReference>
<dbReference type="GO" id="GO:0005525">
    <property type="term" value="F:GTP binding"/>
    <property type="evidence" value="ECO:0007669"/>
    <property type="project" value="UniProtKB-UniRule"/>
</dbReference>
<dbReference type="GO" id="GO:0003924">
    <property type="term" value="F:GTPase activity"/>
    <property type="evidence" value="ECO:0007669"/>
    <property type="project" value="InterPro"/>
</dbReference>
<dbReference type="GO" id="GO:0097216">
    <property type="term" value="F:guanosine tetraphosphate binding"/>
    <property type="evidence" value="ECO:0007669"/>
    <property type="project" value="UniProtKB-ARBA"/>
</dbReference>
<dbReference type="GO" id="GO:0003746">
    <property type="term" value="F:translation elongation factor activity"/>
    <property type="evidence" value="ECO:0007669"/>
    <property type="project" value="UniProtKB-UniRule"/>
</dbReference>
<dbReference type="GO" id="GO:0032790">
    <property type="term" value="P:ribosome disassembly"/>
    <property type="evidence" value="ECO:0007669"/>
    <property type="project" value="TreeGrafter"/>
</dbReference>
<dbReference type="CDD" id="cd01886">
    <property type="entry name" value="EF-G"/>
    <property type="match status" value="1"/>
</dbReference>
<dbReference type="CDD" id="cd16262">
    <property type="entry name" value="EFG_III"/>
    <property type="match status" value="1"/>
</dbReference>
<dbReference type="CDD" id="cd01434">
    <property type="entry name" value="EFG_mtEFG1_IV"/>
    <property type="match status" value="1"/>
</dbReference>
<dbReference type="CDD" id="cd03713">
    <property type="entry name" value="EFG_mtEFG_C"/>
    <property type="match status" value="1"/>
</dbReference>
<dbReference type="CDD" id="cd04088">
    <property type="entry name" value="EFG_mtEFG_II"/>
    <property type="match status" value="1"/>
</dbReference>
<dbReference type="FunFam" id="2.40.30.10:FF:000006">
    <property type="entry name" value="Elongation factor G"/>
    <property type="match status" value="1"/>
</dbReference>
<dbReference type="FunFam" id="3.30.230.10:FF:000003">
    <property type="entry name" value="Elongation factor G"/>
    <property type="match status" value="1"/>
</dbReference>
<dbReference type="FunFam" id="3.30.70.240:FF:000001">
    <property type="entry name" value="Elongation factor G"/>
    <property type="match status" value="1"/>
</dbReference>
<dbReference type="FunFam" id="3.30.70.870:FF:000001">
    <property type="entry name" value="Elongation factor G"/>
    <property type="match status" value="1"/>
</dbReference>
<dbReference type="FunFam" id="3.40.50.300:FF:000029">
    <property type="entry name" value="Elongation factor G"/>
    <property type="match status" value="1"/>
</dbReference>
<dbReference type="Gene3D" id="3.30.230.10">
    <property type="match status" value="1"/>
</dbReference>
<dbReference type="Gene3D" id="3.30.70.240">
    <property type="match status" value="1"/>
</dbReference>
<dbReference type="Gene3D" id="3.30.70.870">
    <property type="entry name" value="Elongation Factor G (Translational Gtpase), domain 3"/>
    <property type="match status" value="1"/>
</dbReference>
<dbReference type="Gene3D" id="3.40.50.300">
    <property type="entry name" value="P-loop containing nucleotide triphosphate hydrolases"/>
    <property type="match status" value="1"/>
</dbReference>
<dbReference type="Gene3D" id="2.40.30.10">
    <property type="entry name" value="Translation factors"/>
    <property type="match status" value="1"/>
</dbReference>
<dbReference type="HAMAP" id="MF_00054_B">
    <property type="entry name" value="EF_G_EF_2_B"/>
    <property type="match status" value="1"/>
</dbReference>
<dbReference type="InterPro" id="IPR041095">
    <property type="entry name" value="EFG_II"/>
</dbReference>
<dbReference type="InterPro" id="IPR009022">
    <property type="entry name" value="EFG_III"/>
</dbReference>
<dbReference type="InterPro" id="IPR035647">
    <property type="entry name" value="EFG_III/V"/>
</dbReference>
<dbReference type="InterPro" id="IPR047872">
    <property type="entry name" value="EFG_IV"/>
</dbReference>
<dbReference type="InterPro" id="IPR035649">
    <property type="entry name" value="EFG_V"/>
</dbReference>
<dbReference type="InterPro" id="IPR000640">
    <property type="entry name" value="EFG_V-like"/>
</dbReference>
<dbReference type="InterPro" id="IPR004161">
    <property type="entry name" value="EFTu-like_2"/>
</dbReference>
<dbReference type="InterPro" id="IPR031157">
    <property type="entry name" value="G_TR_CS"/>
</dbReference>
<dbReference type="InterPro" id="IPR027417">
    <property type="entry name" value="P-loop_NTPase"/>
</dbReference>
<dbReference type="InterPro" id="IPR020568">
    <property type="entry name" value="Ribosomal_Su5_D2-typ_SF"/>
</dbReference>
<dbReference type="InterPro" id="IPR014721">
    <property type="entry name" value="Ribsml_uS5_D2-typ_fold_subgr"/>
</dbReference>
<dbReference type="InterPro" id="IPR005225">
    <property type="entry name" value="Small_GTP-bd"/>
</dbReference>
<dbReference type="InterPro" id="IPR000795">
    <property type="entry name" value="T_Tr_GTP-bd_dom"/>
</dbReference>
<dbReference type="InterPro" id="IPR009000">
    <property type="entry name" value="Transl_B-barrel_sf"/>
</dbReference>
<dbReference type="InterPro" id="IPR004540">
    <property type="entry name" value="Transl_elong_EFG/EF2"/>
</dbReference>
<dbReference type="InterPro" id="IPR005517">
    <property type="entry name" value="Transl_elong_EFG/EF2_IV"/>
</dbReference>
<dbReference type="NCBIfam" id="TIGR00484">
    <property type="entry name" value="EF-G"/>
    <property type="match status" value="1"/>
</dbReference>
<dbReference type="NCBIfam" id="NF009379">
    <property type="entry name" value="PRK12740.1-3"/>
    <property type="match status" value="1"/>
</dbReference>
<dbReference type="NCBIfam" id="NF009381">
    <property type="entry name" value="PRK12740.1-5"/>
    <property type="match status" value="1"/>
</dbReference>
<dbReference type="NCBIfam" id="TIGR00231">
    <property type="entry name" value="small_GTP"/>
    <property type="match status" value="1"/>
</dbReference>
<dbReference type="PANTHER" id="PTHR43261:SF1">
    <property type="entry name" value="RIBOSOME-RELEASING FACTOR 2, MITOCHONDRIAL"/>
    <property type="match status" value="1"/>
</dbReference>
<dbReference type="PANTHER" id="PTHR43261">
    <property type="entry name" value="TRANSLATION ELONGATION FACTOR G-RELATED"/>
    <property type="match status" value="1"/>
</dbReference>
<dbReference type="Pfam" id="PF00679">
    <property type="entry name" value="EFG_C"/>
    <property type="match status" value="1"/>
</dbReference>
<dbReference type="Pfam" id="PF14492">
    <property type="entry name" value="EFG_III"/>
    <property type="match status" value="1"/>
</dbReference>
<dbReference type="Pfam" id="PF03764">
    <property type="entry name" value="EFG_IV"/>
    <property type="match status" value="1"/>
</dbReference>
<dbReference type="Pfam" id="PF00009">
    <property type="entry name" value="GTP_EFTU"/>
    <property type="match status" value="1"/>
</dbReference>
<dbReference type="Pfam" id="PF03144">
    <property type="entry name" value="GTP_EFTU_D2"/>
    <property type="match status" value="1"/>
</dbReference>
<dbReference type="PRINTS" id="PR00315">
    <property type="entry name" value="ELONGATNFCT"/>
</dbReference>
<dbReference type="SMART" id="SM00838">
    <property type="entry name" value="EFG_C"/>
    <property type="match status" value="1"/>
</dbReference>
<dbReference type="SMART" id="SM00889">
    <property type="entry name" value="EFG_IV"/>
    <property type="match status" value="1"/>
</dbReference>
<dbReference type="SUPFAM" id="SSF54980">
    <property type="entry name" value="EF-G C-terminal domain-like"/>
    <property type="match status" value="2"/>
</dbReference>
<dbReference type="SUPFAM" id="SSF52540">
    <property type="entry name" value="P-loop containing nucleoside triphosphate hydrolases"/>
    <property type="match status" value="1"/>
</dbReference>
<dbReference type="SUPFAM" id="SSF54211">
    <property type="entry name" value="Ribosomal protein S5 domain 2-like"/>
    <property type="match status" value="1"/>
</dbReference>
<dbReference type="SUPFAM" id="SSF50447">
    <property type="entry name" value="Translation proteins"/>
    <property type="match status" value="1"/>
</dbReference>
<dbReference type="PROSITE" id="PS00301">
    <property type="entry name" value="G_TR_1"/>
    <property type="match status" value="1"/>
</dbReference>
<dbReference type="PROSITE" id="PS51722">
    <property type="entry name" value="G_TR_2"/>
    <property type="match status" value="1"/>
</dbReference>
<protein>
    <recommendedName>
        <fullName evidence="1">Elongation factor G</fullName>
        <shortName evidence="1">EF-G</shortName>
    </recommendedName>
</protein>
<organism>
    <name type="scientific">Bradyrhizobium sp. (strain BTAi1 / ATCC BAA-1182)</name>
    <dbReference type="NCBI Taxonomy" id="288000"/>
    <lineage>
        <taxon>Bacteria</taxon>
        <taxon>Pseudomonadati</taxon>
        <taxon>Pseudomonadota</taxon>
        <taxon>Alphaproteobacteria</taxon>
        <taxon>Hyphomicrobiales</taxon>
        <taxon>Nitrobacteraceae</taxon>
        <taxon>Bradyrhizobium</taxon>
    </lineage>
</organism>
<comment type="function">
    <text evidence="1">Catalyzes the GTP-dependent ribosomal translocation step during translation elongation. During this step, the ribosome changes from the pre-translocational (PRE) to the post-translocational (POST) state as the newly formed A-site-bound peptidyl-tRNA and P-site-bound deacylated tRNA move to the P and E sites, respectively. Catalyzes the coordinated movement of the two tRNA molecules, the mRNA and conformational changes in the ribosome.</text>
</comment>
<comment type="subcellular location">
    <subcellularLocation>
        <location evidence="1">Cytoplasm</location>
    </subcellularLocation>
</comment>
<comment type="similarity">
    <text evidence="1">Belongs to the TRAFAC class translation factor GTPase superfamily. Classic translation factor GTPase family. EF-G/EF-2 subfamily.</text>
</comment>
<proteinExistence type="inferred from homology"/>
<name>EFG_BRASB</name>